<comment type="function">
    <text evidence="1 8">Serine/threonine-protein kinase involved in the regulation of the mitotic cell cycle, cell proliferation, apoptosis, organization of the cytoskeleton and neurite outgrowth. Functions in part via its role in ubiquitin-dependent proteasomal protein degradation. Functions downstream of ATM and phosphorylates p53/TP53 at 'Ser-46', and thereby contributes to the induction of apoptosis in response to DNA damage. Phosphorylates NFATC1, and thereby inhibits its accumulation in the nucleus and its transcription factor activity. Phosphorylates EIF2B5 at 'Ser-544', enabling its subsequent phosphorylation and inhibition by GSK3B. Likewise, phosphorylation of NFATC1, CRMP2/DPYSL2 and CRMP4/DPYSL3 promotes their subsequent phosphorylation by GSK3B. May play a general role in the priming of GSK3 substrates. Inactivates GYS1 by phosphorylation at 'Ser-641', and potentially also a second phosphorylation site, thus regulating glycogen synthesis. Mediates EDVP E3 ligase complex formation and is required for the phosphorylation and subsequent degradation of KATNA1. Phosphorylates TERT at 'Ser-457', promoting TERT ubiquitination by the EDVP complex. Phosphorylates SIAH2, and thereby increases its ubiquitin ligase activity. Promotes the proteasomal degradation of MYC and JUN, and thereby regulates progress through the mitotic cell cycle and cell proliferation. Promotes proteasomal degradation of GLI2 and GLI3, and thereby plays a role in smoothened and sonic hedgehog signaling. Phosphorylates CRMP2/DPYSL2, CRMP4/DPYSL3, DCX, EIF2B5, EIF4EBP1, GLI2, GLI3, GYS1, JUN, MDM2, MYC, NFATC1, p53/TP53, TAU/MAPT and KATNA1. Can phosphorylate histone H1, histone H3 and histone H2B (in vitro). Can phosphorylate CARHSP1 (in vitro) (By similarity). Plays a role in cytoskeleton organization and neurite outgrowth via its phosphorylation of DCX.</text>
</comment>
<comment type="catalytic activity">
    <reaction evidence="3">
        <text>L-seryl-[protein] + ATP = O-phospho-L-seryl-[protein] + ADP + H(+)</text>
        <dbReference type="Rhea" id="RHEA:17989"/>
        <dbReference type="Rhea" id="RHEA-COMP:9863"/>
        <dbReference type="Rhea" id="RHEA-COMP:11604"/>
        <dbReference type="ChEBI" id="CHEBI:15378"/>
        <dbReference type="ChEBI" id="CHEBI:29999"/>
        <dbReference type="ChEBI" id="CHEBI:30616"/>
        <dbReference type="ChEBI" id="CHEBI:83421"/>
        <dbReference type="ChEBI" id="CHEBI:456216"/>
        <dbReference type="EC" id="2.7.12.1"/>
    </reaction>
</comment>
<comment type="catalytic activity">
    <reaction evidence="3">
        <text>L-threonyl-[protein] + ATP = O-phospho-L-threonyl-[protein] + ADP + H(+)</text>
        <dbReference type="Rhea" id="RHEA:46608"/>
        <dbReference type="Rhea" id="RHEA-COMP:11060"/>
        <dbReference type="Rhea" id="RHEA-COMP:11605"/>
        <dbReference type="ChEBI" id="CHEBI:15378"/>
        <dbReference type="ChEBI" id="CHEBI:30013"/>
        <dbReference type="ChEBI" id="CHEBI:30616"/>
        <dbReference type="ChEBI" id="CHEBI:61977"/>
        <dbReference type="ChEBI" id="CHEBI:456216"/>
        <dbReference type="EC" id="2.7.12.1"/>
    </reaction>
</comment>
<comment type="catalytic activity">
    <reaction evidence="3">
        <text>L-tyrosyl-[protein] + ATP = O-phospho-L-tyrosyl-[protein] + ADP + H(+)</text>
        <dbReference type="Rhea" id="RHEA:10596"/>
        <dbReference type="Rhea" id="RHEA-COMP:10136"/>
        <dbReference type="Rhea" id="RHEA-COMP:20101"/>
        <dbReference type="ChEBI" id="CHEBI:15378"/>
        <dbReference type="ChEBI" id="CHEBI:30616"/>
        <dbReference type="ChEBI" id="CHEBI:46858"/>
        <dbReference type="ChEBI" id="CHEBI:61978"/>
        <dbReference type="ChEBI" id="CHEBI:456216"/>
        <dbReference type="EC" id="2.7.12.1"/>
    </reaction>
</comment>
<comment type="cofactor">
    <cofactor evidence="3">
        <name>Mg(2+)</name>
        <dbReference type="ChEBI" id="CHEBI:18420"/>
    </cofactor>
</comment>
<comment type="cofactor">
    <cofactor evidence="3">
        <name>Mn(2+)</name>
        <dbReference type="ChEBI" id="CHEBI:29035"/>
    </cofactor>
</comment>
<comment type="activity regulation">
    <text evidence="1">Activated by autophosphorylation on the second tyrosine residue in the Tyr-X-Tyr motif in the activation loop.</text>
</comment>
<comment type="subunit">
    <text evidence="1">Component of an E3 ligase complex containing DYRK2, EDD/UBR5, DDB1 and DCAF1 (EDVP complex). Interacts directly with EDD/UBR5, DDB1 and DCAF1. Interacts with SIAH2 and MDM2. Interacts with MAP3K10 and NFATC1. May also interact with CCNL2 (By similarity).</text>
</comment>
<comment type="subcellular location">
    <subcellularLocation>
        <location evidence="7">Cytoplasm</location>
    </subcellularLocation>
    <subcellularLocation>
        <location evidence="3">Nucleus</location>
    </subcellularLocation>
    <text evidence="3">Translocates into the nucleus following DNA damage.</text>
</comment>
<comment type="PTM">
    <text>Autophosphorylates cotranslationally on the second tyrosine residue in the Tyr-X-Tyr motif in the activation loop, but once mature, does not have any protein tyrosine kinase activity. Phosphorylated at Thr-104 and Ser-440 by ATM in response to genotoxic stress.</text>
</comment>
<comment type="PTM">
    <text>Under normal conditions, polyubiquitinated in the nucleus by MDM2, leading to its proteasomal degradation. Phosphorylation on Thr-104 and Ser-440 by ATM in response to genotoxic stress disrupts MDM2 binding and prevents MDM2-mediated ubiquitination and subsequent proteasomal degradation. Polyubiquitinated by SIAH2, leading to its proteasomal degradation. Polyubiquitinated by SIAH2 occurs under normal conditions, and is enhanced in response to hypoxia.</text>
</comment>
<comment type="similarity">
    <text evidence="9">Belongs to the protein kinase superfamily. CMGC Ser/Thr protein kinase family. MNB/DYRK subfamily.</text>
</comment>
<name>DYRK2_MOUSE</name>
<dbReference type="EC" id="2.7.12.1" evidence="3"/>
<dbReference type="EMBL" id="BC085145">
    <property type="protein sequence ID" value="AAH85145.1"/>
    <property type="molecule type" value="mRNA"/>
</dbReference>
<dbReference type="CCDS" id="CCDS24201.1"/>
<dbReference type="RefSeq" id="NP_001014412.1">
    <property type="nucleotide sequence ID" value="NM_001014390.2"/>
</dbReference>
<dbReference type="SMR" id="Q5U4C9"/>
<dbReference type="BioGRID" id="213275">
    <property type="interactions" value="5"/>
</dbReference>
<dbReference type="FunCoup" id="Q5U4C9">
    <property type="interactions" value="2291"/>
</dbReference>
<dbReference type="STRING" id="10090.ENSMUSP00000004281"/>
<dbReference type="iPTMnet" id="Q5U4C9"/>
<dbReference type="PhosphoSitePlus" id="Q5U4C9"/>
<dbReference type="PaxDb" id="10090-ENSMUSP00000004281"/>
<dbReference type="PeptideAtlas" id="Q5U4C9"/>
<dbReference type="ProteomicsDB" id="277619"/>
<dbReference type="Antibodypedia" id="16684">
    <property type="antibodies" value="343 antibodies from 37 providers"/>
</dbReference>
<dbReference type="DNASU" id="69181"/>
<dbReference type="Ensembl" id="ENSMUST00000004281.10">
    <property type="protein sequence ID" value="ENSMUSP00000004281.9"/>
    <property type="gene ID" value="ENSMUSG00000028630.10"/>
</dbReference>
<dbReference type="GeneID" id="69181"/>
<dbReference type="KEGG" id="mmu:69181"/>
<dbReference type="UCSC" id="uc007hea.1">
    <property type="organism name" value="mouse"/>
</dbReference>
<dbReference type="AGR" id="MGI:1330301"/>
<dbReference type="CTD" id="8445"/>
<dbReference type="MGI" id="MGI:1330301">
    <property type="gene designation" value="Dyrk2"/>
</dbReference>
<dbReference type="VEuPathDB" id="HostDB:ENSMUSG00000028630"/>
<dbReference type="eggNOG" id="KOG0667">
    <property type="taxonomic scope" value="Eukaryota"/>
</dbReference>
<dbReference type="GeneTree" id="ENSGT00940000158113"/>
<dbReference type="HOGENOM" id="CLU_000288_5_13_1"/>
<dbReference type="InParanoid" id="Q5U4C9"/>
<dbReference type="OMA" id="HTVGGNK"/>
<dbReference type="OrthoDB" id="9332038at2759"/>
<dbReference type="PhylomeDB" id="Q5U4C9"/>
<dbReference type="TreeFam" id="TF314624"/>
<dbReference type="Reactome" id="R-MMU-6804756">
    <property type="pathway name" value="Regulation of TP53 Activity through Phosphorylation"/>
</dbReference>
<dbReference type="BioGRID-ORCS" id="69181">
    <property type="hits" value="4 hits in 81 CRISPR screens"/>
</dbReference>
<dbReference type="ChiTaRS" id="Dyrk2">
    <property type="organism name" value="mouse"/>
</dbReference>
<dbReference type="PRO" id="PR:Q5U4C9"/>
<dbReference type="Proteomes" id="UP000000589">
    <property type="component" value="Chromosome 10"/>
</dbReference>
<dbReference type="RNAct" id="Q5U4C9">
    <property type="molecule type" value="protein"/>
</dbReference>
<dbReference type="Bgee" id="ENSMUSG00000028630">
    <property type="expression patterns" value="Expressed in otolith organ and 213 other cell types or tissues"/>
</dbReference>
<dbReference type="GO" id="GO:0005737">
    <property type="term" value="C:cytoplasm"/>
    <property type="evidence" value="ECO:0000250"/>
    <property type="project" value="UniProtKB"/>
</dbReference>
<dbReference type="GO" id="GO:0005829">
    <property type="term" value="C:cytosol"/>
    <property type="evidence" value="ECO:0007669"/>
    <property type="project" value="Ensembl"/>
</dbReference>
<dbReference type="GO" id="GO:0005654">
    <property type="term" value="C:nucleoplasm"/>
    <property type="evidence" value="ECO:0007669"/>
    <property type="project" value="Ensembl"/>
</dbReference>
<dbReference type="GO" id="GO:0005634">
    <property type="term" value="C:nucleus"/>
    <property type="evidence" value="ECO:0000250"/>
    <property type="project" value="UniProtKB"/>
</dbReference>
<dbReference type="GO" id="GO:1990904">
    <property type="term" value="C:ribonucleoprotein complex"/>
    <property type="evidence" value="ECO:0000314"/>
    <property type="project" value="MGI"/>
</dbReference>
<dbReference type="GO" id="GO:0000151">
    <property type="term" value="C:ubiquitin ligase complex"/>
    <property type="evidence" value="ECO:0007669"/>
    <property type="project" value="Ensembl"/>
</dbReference>
<dbReference type="GO" id="GO:0005524">
    <property type="term" value="F:ATP binding"/>
    <property type="evidence" value="ECO:0000250"/>
    <property type="project" value="UniProtKB"/>
</dbReference>
<dbReference type="GO" id="GO:0000287">
    <property type="term" value="F:magnesium ion binding"/>
    <property type="evidence" value="ECO:0000250"/>
    <property type="project" value="UniProtKB"/>
</dbReference>
<dbReference type="GO" id="GO:0030145">
    <property type="term" value="F:manganese ion binding"/>
    <property type="evidence" value="ECO:0000250"/>
    <property type="project" value="UniProtKB"/>
</dbReference>
<dbReference type="GO" id="GO:0106310">
    <property type="term" value="F:protein serine kinase activity"/>
    <property type="evidence" value="ECO:0007669"/>
    <property type="project" value="RHEA"/>
</dbReference>
<dbReference type="GO" id="GO:0004674">
    <property type="term" value="F:protein serine/threonine kinase activity"/>
    <property type="evidence" value="ECO:0000250"/>
    <property type="project" value="UniProtKB"/>
</dbReference>
<dbReference type="GO" id="GO:0004712">
    <property type="term" value="F:protein serine/threonine/tyrosine kinase activity"/>
    <property type="evidence" value="ECO:0007669"/>
    <property type="project" value="UniProtKB-EC"/>
</dbReference>
<dbReference type="GO" id="GO:0004713">
    <property type="term" value="F:protein tyrosine kinase activity"/>
    <property type="evidence" value="ECO:0000250"/>
    <property type="project" value="UniProtKB"/>
</dbReference>
<dbReference type="GO" id="GO:0042771">
    <property type="term" value="P:intrinsic apoptotic signaling pathway in response to DNA damage by p53 class mediator"/>
    <property type="evidence" value="ECO:0000250"/>
    <property type="project" value="UniProtKB"/>
</dbReference>
<dbReference type="GO" id="GO:0070885">
    <property type="term" value="P:negative regulation of calcineurin-NFAT signaling cascade"/>
    <property type="evidence" value="ECO:0007669"/>
    <property type="project" value="Ensembl"/>
</dbReference>
<dbReference type="GO" id="GO:0045725">
    <property type="term" value="P:positive regulation of glycogen biosynthetic process"/>
    <property type="evidence" value="ECO:0000250"/>
    <property type="project" value="UniProtKB"/>
</dbReference>
<dbReference type="GO" id="GO:0006468">
    <property type="term" value="P:protein phosphorylation"/>
    <property type="evidence" value="ECO:0000250"/>
    <property type="project" value="UniProtKB"/>
</dbReference>
<dbReference type="GO" id="GO:0007224">
    <property type="term" value="P:smoothened signaling pathway"/>
    <property type="evidence" value="ECO:0007669"/>
    <property type="project" value="Ensembl"/>
</dbReference>
<dbReference type="CDD" id="cd14224">
    <property type="entry name" value="PKc_DYRK2_3"/>
    <property type="match status" value="1"/>
</dbReference>
<dbReference type="FunFam" id="3.30.10.30:FF:000001">
    <property type="entry name" value="Dual specificity tyrosine-phosphorylation-regulated kinase 2"/>
    <property type="match status" value="1"/>
</dbReference>
<dbReference type="FunFam" id="1.10.510.10:FF:000112">
    <property type="entry name" value="Putative dual specificity tyrosine-phosphorylation-regulated kinase 2"/>
    <property type="match status" value="1"/>
</dbReference>
<dbReference type="FunFam" id="3.30.200.20:FF:000127">
    <property type="entry name" value="Putative dual specificity tyrosine-phosphorylation-regulated kinase 2"/>
    <property type="match status" value="1"/>
</dbReference>
<dbReference type="Gene3D" id="3.30.10.30">
    <property type="entry name" value="DYRK"/>
    <property type="match status" value="1"/>
</dbReference>
<dbReference type="Gene3D" id="3.30.200.20">
    <property type="entry name" value="Phosphorylase Kinase, domain 1"/>
    <property type="match status" value="1"/>
</dbReference>
<dbReference type="Gene3D" id="1.10.510.10">
    <property type="entry name" value="Transferase(Phosphotransferase) domain 1"/>
    <property type="match status" value="1"/>
</dbReference>
<dbReference type="InterPro" id="IPR042521">
    <property type="entry name" value="DYRK"/>
</dbReference>
<dbReference type="InterPro" id="IPR011009">
    <property type="entry name" value="Kinase-like_dom_sf"/>
</dbReference>
<dbReference type="InterPro" id="IPR000719">
    <property type="entry name" value="Prot_kinase_dom"/>
</dbReference>
<dbReference type="InterPro" id="IPR017441">
    <property type="entry name" value="Protein_kinase_ATP_BS"/>
</dbReference>
<dbReference type="InterPro" id="IPR008271">
    <property type="entry name" value="Ser/Thr_kinase_AS"/>
</dbReference>
<dbReference type="InterPro" id="IPR050494">
    <property type="entry name" value="Ser_Thr_dual-spec_kinase"/>
</dbReference>
<dbReference type="PANTHER" id="PTHR24058">
    <property type="entry name" value="DUAL SPECIFICITY PROTEIN KINASE"/>
    <property type="match status" value="1"/>
</dbReference>
<dbReference type="PANTHER" id="PTHR24058:SF51">
    <property type="entry name" value="DUAL SPECIFICITY TYROSINE-PHOSPHORYLATION-REGULATED KINASE 2"/>
    <property type="match status" value="1"/>
</dbReference>
<dbReference type="Pfam" id="PF00069">
    <property type="entry name" value="Pkinase"/>
    <property type="match status" value="1"/>
</dbReference>
<dbReference type="SMART" id="SM00220">
    <property type="entry name" value="S_TKc"/>
    <property type="match status" value="1"/>
</dbReference>
<dbReference type="SUPFAM" id="SSF56112">
    <property type="entry name" value="Protein kinase-like (PK-like)"/>
    <property type="match status" value="1"/>
</dbReference>
<dbReference type="PROSITE" id="PS00107">
    <property type="entry name" value="PROTEIN_KINASE_ATP"/>
    <property type="match status" value="1"/>
</dbReference>
<dbReference type="PROSITE" id="PS50011">
    <property type="entry name" value="PROTEIN_KINASE_DOM"/>
    <property type="match status" value="1"/>
</dbReference>
<dbReference type="PROSITE" id="PS00108">
    <property type="entry name" value="PROTEIN_KINASE_ST"/>
    <property type="match status" value="1"/>
</dbReference>
<proteinExistence type="evidence at transcript level"/>
<evidence type="ECO:0000250" key="1"/>
<evidence type="ECO:0000250" key="2">
    <source>
        <dbReference type="UniProtKB" id="P28523"/>
    </source>
</evidence>
<evidence type="ECO:0000250" key="3">
    <source>
        <dbReference type="UniProtKB" id="Q92630"/>
    </source>
</evidence>
<evidence type="ECO:0000255" key="4">
    <source>
        <dbReference type="PROSITE-ProRule" id="PRU00159"/>
    </source>
</evidence>
<evidence type="ECO:0000255" key="5">
    <source>
        <dbReference type="PROSITE-ProRule" id="PRU10027"/>
    </source>
</evidence>
<evidence type="ECO:0000256" key="6">
    <source>
        <dbReference type="SAM" id="MobiDB-lite"/>
    </source>
</evidence>
<evidence type="ECO:0000269" key="7">
    <source>
    </source>
</evidence>
<evidence type="ECO:0000269" key="8">
    <source>
    </source>
</evidence>
<evidence type="ECO:0000305" key="9"/>
<evidence type="ECO:0000312" key="10">
    <source>
        <dbReference type="EMBL" id="AAH85145.1"/>
    </source>
</evidence>
<evidence type="ECO:0000312" key="11">
    <source>
        <dbReference type="MGI" id="MGI:1330301"/>
    </source>
</evidence>
<accession>Q5U4C9</accession>
<keyword id="KW-0053">Apoptosis</keyword>
<keyword id="KW-0067">ATP-binding</keyword>
<keyword id="KW-0963">Cytoplasm</keyword>
<keyword id="KW-0418">Kinase</keyword>
<keyword id="KW-0460">Magnesium</keyword>
<keyword id="KW-0464">Manganese</keyword>
<keyword id="KW-0547">Nucleotide-binding</keyword>
<keyword id="KW-0539">Nucleus</keyword>
<keyword id="KW-0597">Phosphoprotein</keyword>
<keyword id="KW-1185">Reference proteome</keyword>
<keyword id="KW-0723">Serine/threonine-protein kinase</keyword>
<keyword id="KW-0808">Transferase</keyword>
<keyword id="KW-0829">Tyrosine-protein kinase</keyword>
<keyword id="KW-0832">Ubl conjugation</keyword>
<keyword id="KW-0833">Ubl conjugation pathway</keyword>
<reference evidence="10" key="1">
    <citation type="journal article" date="2004" name="Genome Res.">
        <title>The status, quality, and expansion of the NIH full-length cDNA project: the Mammalian Gene Collection (MGC).</title>
        <authorList>
            <consortium name="The MGC Project Team"/>
        </authorList>
    </citation>
    <scope>NUCLEOTIDE SEQUENCE [LARGE SCALE MRNA]</scope>
    <source>
        <strain evidence="10">C57BL/6J</strain>
        <tissue evidence="10">Brain</tissue>
    </source>
</reference>
<reference key="2">
    <citation type="journal article" date="2010" name="J. Biol. Chem.">
        <title>DYRK1A and DYRK3 promote cell survival through phosphorylation and activation of SIRT1.</title>
        <authorList>
            <person name="Guo X."/>
            <person name="Williams J.G."/>
            <person name="Schug T.T."/>
            <person name="Li X."/>
        </authorList>
    </citation>
    <scope>SUBCELLULAR LOCATION</scope>
</reference>
<reference key="3">
    <citation type="journal article" date="2012" name="Cytoskeleton">
        <title>Dyrk kinases regulate phosphorylation of doublecortin, cytoskeletal organization, and neuronal morphology.</title>
        <authorList>
            <person name="Slepak T.I."/>
            <person name="Salay L.D."/>
            <person name="Lemmon V.P."/>
            <person name="Bixby J.L."/>
        </authorList>
    </citation>
    <scope>FUNCTION</scope>
</reference>
<sequence length="599" mass="66556">MLTRKPSAAAPAAYPTGRGGDTAVRQLQASPGIGAGAPRSGVGTGPPSPIALPPLRASNATTTAHTIGGSKHTMNDHLHLNSHGQIQVQQLFEDNSNKRTVLTTQPNGLTTVGKTGLPGVPERQLESIHRRQGSSTSLKSMEGMGKVKASPMTPEQAMKQYMQKLTAFEHHEIFSYPEIYFLGPNAKKRQGMTGGPNNGGYDDDQGSYVQVPHDHVAYRYEVLKVIGKGSFGQVVKAYDHKVHQHVALKMVRNEKRFHRQAAEEIRILEHLRKQDKDNTMNVIHMLENFTFRNHICMTFELLSMNLYELIKKNKFQGFSLPLVRKFAHSILQCLDALHKNRIIHCDLKPENILLKQQGRSSIKVIDFGSSCYEHQRVYTYIQSRFYRAPEVILGARYGMPIDMWSLGCILAELLTGYPLLPGEDEGDQLACMIELLGMPSQKLLDASKRAKNFVSSKGYPRYCTVTTLSDGSVVLNGGRSRRGKLRGPPESREWGNALKGCDDPLFLDFLKQCLEWDPAVRMTPGQALRHPWLRRRLPKPPTGEKTAVKRVTESTGAITSISKLPPPSSSASKLRTNLAQMTDANGNIQQRTVLPKLVS</sequence>
<organism>
    <name type="scientific">Mus musculus</name>
    <name type="common">Mouse</name>
    <dbReference type="NCBI Taxonomy" id="10090"/>
    <lineage>
        <taxon>Eukaryota</taxon>
        <taxon>Metazoa</taxon>
        <taxon>Chordata</taxon>
        <taxon>Craniata</taxon>
        <taxon>Vertebrata</taxon>
        <taxon>Euteleostomi</taxon>
        <taxon>Mammalia</taxon>
        <taxon>Eutheria</taxon>
        <taxon>Euarchontoglires</taxon>
        <taxon>Glires</taxon>
        <taxon>Rodentia</taxon>
        <taxon>Myomorpha</taxon>
        <taxon>Muroidea</taxon>
        <taxon>Muridae</taxon>
        <taxon>Murinae</taxon>
        <taxon>Mus</taxon>
        <taxon>Mus</taxon>
    </lineage>
</organism>
<feature type="chain" id="PRO_0000291265" description="Dual specificity tyrosine-phosphorylation-regulated kinase 2">
    <location>
        <begin position="1"/>
        <end position="599"/>
    </location>
</feature>
<feature type="domain" description="Protein kinase" evidence="4">
    <location>
        <begin position="220"/>
        <end position="533"/>
    </location>
</feature>
<feature type="region of interest" description="Disordered" evidence="6">
    <location>
        <begin position="1"/>
        <end position="55"/>
    </location>
</feature>
<feature type="short sequence motif" description="Nuclear localization signal" evidence="1">
    <location>
        <begin position="187"/>
        <end position="189"/>
    </location>
</feature>
<feature type="active site" description="Proton acceptor" evidence="2 4 5">
    <location>
        <position position="346"/>
    </location>
</feature>
<feature type="binding site" evidence="2 4">
    <location>
        <begin position="226"/>
        <end position="234"/>
    </location>
    <ligand>
        <name>ATP</name>
        <dbReference type="ChEBI" id="CHEBI:30616"/>
    </ligand>
</feature>
<feature type="binding site" evidence="2 4">
    <location>
        <position position="249"/>
    </location>
    <ligand>
        <name>ATP</name>
        <dbReference type="ChEBI" id="CHEBI:30616"/>
    </ligand>
</feature>
<feature type="binding site" evidence="4">
    <location>
        <begin position="299"/>
        <end position="302"/>
    </location>
    <ligand>
        <name>ATP</name>
        <dbReference type="ChEBI" id="CHEBI:30616"/>
    </ligand>
</feature>
<feature type="modified residue" description="Phosphoserine" evidence="3">
    <location>
        <position position="30"/>
    </location>
</feature>
<feature type="modified residue" description="Phosphothreonine; by ATM" evidence="3">
    <location>
        <position position="104"/>
    </location>
</feature>
<feature type="modified residue" description="Phosphothreonine; by MAP3K10" evidence="3">
    <location>
        <position position="379"/>
    </location>
</feature>
<feature type="modified residue" description="Phosphotyrosine; by autocatalysis" evidence="3">
    <location>
        <position position="380"/>
    </location>
</feature>
<feature type="modified residue" description="Phosphoserine; by ATM" evidence="3">
    <location>
        <position position="440"/>
    </location>
</feature>
<feature type="modified residue" description="Phosphoserine; by MAP3K10" evidence="3">
    <location>
        <position position="447"/>
    </location>
</feature>
<gene>
    <name evidence="11" type="primary">Dyrk2</name>
</gene>
<protein>
    <recommendedName>
        <fullName>Dual specificity tyrosine-phosphorylation-regulated kinase 2</fullName>
        <ecNumber evidence="3">2.7.12.1</ecNumber>
    </recommendedName>
</protein>